<sequence>MEIECPICDDGKLHEVEVLEEKKGKFKRRNAEFDAEVYIVVCKDCGTKGIVRRVRQINMESYEFPLED</sequence>
<reference key="1">
    <citation type="journal article" date="1997" name="Nature">
        <title>The complete genome sequence of the hyperthermophilic, sulphate-reducing archaeon Archaeoglobus fulgidus.</title>
        <authorList>
            <person name="Klenk H.-P."/>
            <person name="Clayton R.A."/>
            <person name="Tomb J.-F."/>
            <person name="White O."/>
            <person name="Nelson K.E."/>
            <person name="Ketchum K.A."/>
            <person name="Dodson R.J."/>
            <person name="Gwinn M.L."/>
            <person name="Hickey E.K."/>
            <person name="Peterson J.D."/>
            <person name="Richardson D.L."/>
            <person name="Kerlavage A.R."/>
            <person name="Graham D.E."/>
            <person name="Kyrpides N.C."/>
            <person name="Fleischmann R.D."/>
            <person name="Quackenbush J."/>
            <person name="Lee N.H."/>
            <person name="Sutton G.G."/>
            <person name="Gill S.R."/>
            <person name="Kirkness E.F."/>
            <person name="Dougherty B.A."/>
            <person name="McKenney K."/>
            <person name="Adams M.D."/>
            <person name="Loftus B.J."/>
            <person name="Peterson S.N."/>
            <person name="Reich C.I."/>
            <person name="McNeil L.K."/>
            <person name="Badger J.H."/>
            <person name="Glodek A."/>
            <person name="Zhou L."/>
            <person name="Overbeek R."/>
            <person name="Gocayne J.D."/>
            <person name="Weidman J.F."/>
            <person name="McDonald L.A."/>
            <person name="Utterback T.R."/>
            <person name="Cotton M.D."/>
            <person name="Spriggs T."/>
            <person name="Artiach P."/>
            <person name="Kaine B.P."/>
            <person name="Sykes S.M."/>
            <person name="Sadow P.W."/>
            <person name="D'Andrea K.P."/>
            <person name="Bowman C."/>
            <person name="Fujii C."/>
            <person name="Garland S.A."/>
            <person name="Mason T.M."/>
            <person name="Olsen G.J."/>
            <person name="Fraser C.M."/>
            <person name="Smith H.O."/>
            <person name="Woese C.R."/>
            <person name="Venter J.C."/>
        </authorList>
    </citation>
    <scope>NUCLEOTIDE SEQUENCE [LARGE SCALE GENOMIC DNA]</scope>
    <source>
        <strain>ATCC 49558 / DSM 4304 / JCM 9628 / NBRC 100126 / VC-16</strain>
    </source>
</reference>
<proteinExistence type="predicted"/>
<dbReference type="EMBL" id="AE000782">
    <property type="protein sequence ID" value="AAB88969.1"/>
    <property type="molecule type" value="Genomic_DNA"/>
</dbReference>
<dbReference type="PIR" id="E69536">
    <property type="entry name" value="E69536"/>
</dbReference>
<dbReference type="RefSeq" id="WP_010879782.1">
    <property type="nucleotide sequence ID" value="NC_000917.1"/>
</dbReference>
<dbReference type="STRING" id="224325.AF_2293"/>
<dbReference type="PaxDb" id="224325-AF_2293"/>
<dbReference type="EnsemblBacteria" id="AAB88969">
    <property type="protein sequence ID" value="AAB88969"/>
    <property type="gene ID" value="AF_2293"/>
</dbReference>
<dbReference type="KEGG" id="afu:AF_2293"/>
<dbReference type="eggNOG" id="arCOG12218">
    <property type="taxonomic scope" value="Archaea"/>
</dbReference>
<dbReference type="HOGENOM" id="CLU_2783808_0_0_2"/>
<dbReference type="Proteomes" id="UP000002199">
    <property type="component" value="Chromosome"/>
</dbReference>
<name>Y2293_ARCFU</name>
<protein>
    <recommendedName>
        <fullName>Uncharacterized protein AF_2293</fullName>
    </recommendedName>
</protein>
<gene>
    <name type="ordered locus">AF_2293</name>
</gene>
<organism>
    <name type="scientific">Archaeoglobus fulgidus (strain ATCC 49558 / DSM 4304 / JCM 9628 / NBRC 100126 / VC-16)</name>
    <dbReference type="NCBI Taxonomy" id="224325"/>
    <lineage>
        <taxon>Archaea</taxon>
        <taxon>Methanobacteriati</taxon>
        <taxon>Methanobacteriota</taxon>
        <taxon>Archaeoglobi</taxon>
        <taxon>Archaeoglobales</taxon>
        <taxon>Archaeoglobaceae</taxon>
        <taxon>Archaeoglobus</taxon>
    </lineage>
</organism>
<feature type="chain" id="PRO_0000128134" description="Uncharacterized protein AF_2293">
    <location>
        <begin position="1"/>
        <end position="68"/>
    </location>
</feature>
<keyword id="KW-1185">Reference proteome</keyword>
<accession>O27991</accession>